<comment type="function">
    <text evidence="1">Represses a number of genes involved in the response to DNA damage (SOS response), including recA and lexA. In the presence of single-stranded DNA, RecA interacts with LexA causing an autocatalytic cleavage which disrupts the DNA-binding part of LexA, leading to derepression of the SOS regulon and eventually DNA repair.</text>
</comment>
<comment type="catalytic activity">
    <reaction evidence="1">
        <text>Hydrolysis of Ala-|-Gly bond in repressor LexA.</text>
        <dbReference type="EC" id="3.4.21.88"/>
    </reaction>
</comment>
<comment type="subunit">
    <text evidence="1">Homodimer.</text>
</comment>
<comment type="similarity">
    <text evidence="1">Belongs to the peptidase S24 family.</text>
</comment>
<keyword id="KW-0068">Autocatalytic cleavage</keyword>
<keyword id="KW-0227">DNA damage</keyword>
<keyword id="KW-0234">DNA repair</keyword>
<keyword id="KW-0235">DNA replication</keyword>
<keyword id="KW-0238">DNA-binding</keyword>
<keyword id="KW-0378">Hydrolase</keyword>
<keyword id="KW-1185">Reference proteome</keyword>
<keyword id="KW-0678">Repressor</keyword>
<keyword id="KW-0742">SOS response</keyword>
<keyword id="KW-0804">Transcription</keyword>
<keyword id="KW-0805">Transcription regulation</keyword>
<evidence type="ECO:0000255" key="1">
    <source>
        <dbReference type="HAMAP-Rule" id="MF_00015"/>
    </source>
</evidence>
<proteinExistence type="inferred from homology"/>
<sequence length="206" mass="22672">MATHDSKQLEILQYIYDTVENRGFPPTVREICAAVGLSSTSTVHGHLTRLERKGYLIKDATKPRALEITHAGLDALGIKPKDIPVIGVVTAGQPILAVQDVEDYFPLPPNLASDAGELFMLRVHGTSMINAGILNGDYVIVRKQTTAQNGEIVVAMTDDGEATVKRFFKEDLHYRLQPENDAMDPIILNHVQILGKVVGLYRTNID</sequence>
<protein>
    <recommendedName>
        <fullName evidence="1">LexA repressor</fullName>
        <ecNumber evidence="1">3.4.21.88</ecNumber>
    </recommendedName>
</protein>
<feature type="chain" id="PRO_0000322737" description="LexA repressor">
    <location>
        <begin position="1"/>
        <end position="206"/>
    </location>
</feature>
<feature type="DNA-binding region" description="H-T-H motif" evidence="1">
    <location>
        <begin position="28"/>
        <end position="48"/>
    </location>
</feature>
<feature type="active site" description="For autocatalytic cleavage activity" evidence="1">
    <location>
        <position position="127"/>
    </location>
</feature>
<feature type="active site" description="For autocatalytic cleavage activity" evidence="1">
    <location>
        <position position="165"/>
    </location>
</feature>
<feature type="site" description="Cleavage; by autolysis" evidence="1">
    <location>
        <begin position="91"/>
        <end position="92"/>
    </location>
</feature>
<dbReference type="EC" id="3.4.21.88" evidence="1"/>
<dbReference type="EMBL" id="CR954253">
    <property type="protein sequence ID" value="CAI98157.1"/>
    <property type="molecule type" value="Genomic_DNA"/>
</dbReference>
<dbReference type="RefSeq" id="WP_003618548.1">
    <property type="nucleotide sequence ID" value="NZ_JQAV01000006.1"/>
</dbReference>
<dbReference type="SMR" id="Q1G9M5"/>
<dbReference type="STRING" id="390333.Ldb1356"/>
<dbReference type="MEROPS" id="S24.001"/>
<dbReference type="KEGG" id="ldb:Ldb1356"/>
<dbReference type="PATRIC" id="fig|390333.13.peg.1723"/>
<dbReference type="eggNOG" id="COG1974">
    <property type="taxonomic scope" value="Bacteria"/>
</dbReference>
<dbReference type="HOGENOM" id="CLU_066192_45_1_9"/>
<dbReference type="BioCyc" id="LDEL390333:LDB_RS05815-MONOMER"/>
<dbReference type="Proteomes" id="UP000001259">
    <property type="component" value="Chromosome"/>
</dbReference>
<dbReference type="GO" id="GO:0003677">
    <property type="term" value="F:DNA binding"/>
    <property type="evidence" value="ECO:0007669"/>
    <property type="project" value="UniProtKB-UniRule"/>
</dbReference>
<dbReference type="GO" id="GO:0004252">
    <property type="term" value="F:serine-type endopeptidase activity"/>
    <property type="evidence" value="ECO:0007669"/>
    <property type="project" value="UniProtKB-UniRule"/>
</dbReference>
<dbReference type="GO" id="GO:0006281">
    <property type="term" value="P:DNA repair"/>
    <property type="evidence" value="ECO:0007669"/>
    <property type="project" value="UniProtKB-UniRule"/>
</dbReference>
<dbReference type="GO" id="GO:0006260">
    <property type="term" value="P:DNA replication"/>
    <property type="evidence" value="ECO:0007669"/>
    <property type="project" value="UniProtKB-UniRule"/>
</dbReference>
<dbReference type="GO" id="GO:0045892">
    <property type="term" value="P:negative regulation of DNA-templated transcription"/>
    <property type="evidence" value="ECO:0007669"/>
    <property type="project" value="UniProtKB-UniRule"/>
</dbReference>
<dbReference type="GO" id="GO:0006508">
    <property type="term" value="P:proteolysis"/>
    <property type="evidence" value="ECO:0007669"/>
    <property type="project" value="InterPro"/>
</dbReference>
<dbReference type="GO" id="GO:0009432">
    <property type="term" value="P:SOS response"/>
    <property type="evidence" value="ECO:0007669"/>
    <property type="project" value="UniProtKB-UniRule"/>
</dbReference>
<dbReference type="CDD" id="cd00090">
    <property type="entry name" value="HTH_ARSR"/>
    <property type="match status" value="1"/>
</dbReference>
<dbReference type="CDD" id="cd06529">
    <property type="entry name" value="S24_LexA-like"/>
    <property type="match status" value="1"/>
</dbReference>
<dbReference type="FunFam" id="2.10.109.10:FF:000001">
    <property type="entry name" value="LexA repressor"/>
    <property type="match status" value="1"/>
</dbReference>
<dbReference type="Gene3D" id="2.10.109.10">
    <property type="entry name" value="Umud Fragment, subunit A"/>
    <property type="match status" value="1"/>
</dbReference>
<dbReference type="Gene3D" id="1.10.10.10">
    <property type="entry name" value="Winged helix-like DNA-binding domain superfamily/Winged helix DNA-binding domain"/>
    <property type="match status" value="1"/>
</dbReference>
<dbReference type="HAMAP" id="MF_00015">
    <property type="entry name" value="LexA"/>
    <property type="match status" value="1"/>
</dbReference>
<dbReference type="InterPro" id="IPR011991">
    <property type="entry name" value="ArsR-like_HTH"/>
</dbReference>
<dbReference type="InterPro" id="IPR006200">
    <property type="entry name" value="LexA"/>
</dbReference>
<dbReference type="InterPro" id="IPR039418">
    <property type="entry name" value="LexA-like"/>
</dbReference>
<dbReference type="InterPro" id="IPR036286">
    <property type="entry name" value="LexA/Signal_pep-like_sf"/>
</dbReference>
<dbReference type="InterPro" id="IPR006199">
    <property type="entry name" value="LexA_DNA-bd_dom"/>
</dbReference>
<dbReference type="InterPro" id="IPR050077">
    <property type="entry name" value="LexA_repressor"/>
</dbReference>
<dbReference type="InterPro" id="IPR006197">
    <property type="entry name" value="Peptidase_S24_LexA"/>
</dbReference>
<dbReference type="InterPro" id="IPR015927">
    <property type="entry name" value="Peptidase_S24_S26A/B/C"/>
</dbReference>
<dbReference type="InterPro" id="IPR036388">
    <property type="entry name" value="WH-like_DNA-bd_sf"/>
</dbReference>
<dbReference type="InterPro" id="IPR036390">
    <property type="entry name" value="WH_DNA-bd_sf"/>
</dbReference>
<dbReference type="NCBIfam" id="TIGR00498">
    <property type="entry name" value="lexA"/>
    <property type="match status" value="1"/>
</dbReference>
<dbReference type="PANTHER" id="PTHR33516">
    <property type="entry name" value="LEXA REPRESSOR"/>
    <property type="match status" value="1"/>
</dbReference>
<dbReference type="PANTHER" id="PTHR33516:SF2">
    <property type="entry name" value="LEXA REPRESSOR-RELATED"/>
    <property type="match status" value="1"/>
</dbReference>
<dbReference type="Pfam" id="PF01726">
    <property type="entry name" value="LexA_DNA_bind"/>
    <property type="match status" value="1"/>
</dbReference>
<dbReference type="Pfam" id="PF00717">
    <property type="entry name" value="Peptidase_S24"/>
    <property type="match status" value="1"/>
</dbReference>
<dbReference type="PRINTS" id="PR00726">
    <property type="entry name" value="LEXASERPTASE"/>
</dbReference>
<dbReference type="SUPFAM" id="SSF51306">
    <property type="entry name" value="LexA/Signal peptidase"/>
    <property type="match status" value="1"/>
</dbReference>
<dbReference type="SUPFAM" id="SSF46785">
    <property type="entry name" value="Winged helix' DNA-binding domain"/>
    <property type="match status" value="1"/>
</dbReference>
<accession>Q1G9M5</accession>
<organism>
    <name type="scientific">Lactobacillus delbrueckii subsp. bulgaricus (strain ATCC 11842 / DSM 20081 / BCRC 10696 / JCM 1002 / NBRC 13953 / NCIMB 11778 / NCTC 12712 / WDCM 00102 / Lb 14)</name>
    <dbReference type="NCBI Taxonomy" id="390333"/>
    <lineage>
        <taxon>Bacteria</taxon>
        <taxon>Bacillati</taxon>
        <taxon>Bacillota</taxon>
        <taxon>Bacilli</taxon>
        <taxon>Lactobacillales</taxon>
        <taxon>Lactobacillaceae</taxon>
        <taxon>Lactobacillus</taxon>
    </lineage>
</organism>
<gene>
    <name evidence="1" type="primary">lexA</name>
    <name type="ordered locus">Ldb1356</name>
</gene>
<name>LEXA_LACDA</name>
<reference key="1">
    <citation type="journal article" date="2006" name="Proc. Natl. Acad. Sci. U.S.A.">
        <title>The complete genome sequence of Lactobacillus bulgaricus reveals extensive and ongoing reductive evolution.</title>
        <authorList>
            <person name="van de Guchte M."/>
            <person name="Penaud S."/>
            <person name="Grimaldi C."/>
            <person name="Barbe V."/>
            <person name="Bryson K."/>
            <person name="Nicolas P."/>
            <person name="Robert C."/>
            <person name="Oztas S."/>
            <person name="Mangenot S."/>
            <person name="Couloux A."/>
            <person name="Loux V."/>
            <person name="Dervyn R."/>
            <person name="Bossy R."/>
            <person name="Bolotin A."/>
            <person name="Batto J.-M."/>
            <person name="Walunas T."/>
            <person name="Gibrat J.-F."/>
            <person name="Bessieres P."/>
            <person name="Weissenbach J."/>
            <person name="Ehrlich S.D."/>
            <person name="Maguin E."/>
        </authorList>
    </citation>
    <scope>NUCLEOTIDE SEQUENCE [LARGE SCALE GENOMIC DNA]</scope>
    <source>
        <strain>ATCC 11842 / DSM 20081 / BCRC 10696 / JCM 1002 / NBRC 13953 / NCIMB 11778 / NCTC 12712 / WDCM 00102 / Lb 14</strain>
    </source>
</reference>